<dbReference type="EMBL" id="AY464947">
    <property type="protein sequence ID" value="AAS38571.1"/>
    <property type="molecule type" value="mRNA"/>
</dbReference>
<dbReference type="EMBL" id="Z96936">
    <property type="protein sequence ID" value="CAB09665.1"/>
    <property type="status" value="ALT_FRAME"/>
    <property type="molecule type" value="mRNA"/>
</dbReference>
<dbReference type="EMBL" id="AC006836">
    <property type="protein sequence ID" value="AAD20083.1"/>
    <property type="molecule type" value="Genomic_DNA"/>
</dbReference>
<dbReference type="EMBL" id="CP002685">
    <property type="protein sequence ID" value="AEC05735.1"/>
    <property type="molecule type" value="Genomic_DNA"/>
</dbReference>
<dbReference type="EMBL" id="CP002685">
    <property type="protein sequence ID" value="AEC05736.1"/>
    <property type="molecule type" value="Genomic_DNA"/>
</dbReference>
<dbReference type="EMBL" id="CP002685">
    <property type="protein sequence ID" value="ANM61758.1"/>
    <property type="molecule type" value="Genomic_DNA"/>
</dbReference>
<dbReference type="EMBL" id="AF412118">
    <property type="protein sequence ID" value="AAL06570.1"/>
    <property type="molecule type" value="mRNA"/>
</dbReference>
<dbReference type="EMBL" id="AY045933">
    <property type="protein sequence ID" value="AAK76607.1"/>
    <property type="molecule type" value="mRNA"/>
</dbReference>
<dbReference type="EMBL" id="AY113867">
    <property type="protein sequence ID" value="AAM44915.1"/>
    <property type="molecule type" value="mRNA"/>
</dbReference>
<dbReference type="EMBL" id="AY084847">
    <property type="protein sequence ID" value="AAM61412.1"/>
    <property type="molecule type" value="mRNA"/>
</dbReference>
<dbReference type="PIR" id="B84451">
    <property type="entry name" value="B84451"/>
</dbReference>
<dbReference type="RefSeq" id="NP_001154491.1">
    <property type="nucleotide sequence ID" value="NM_001161019.2"/>
</dbReference>
<dbReference type="RefSeq" id="NP_001323957.1">
    <property type="nucleotide sequence ID" value="NM_001335199.1"/>
</dbReference>
<dbReference type="RefSeq" id="NP_178464.1">
    <property type="nucleotide sequence ID" value="NM_126416.3"/>
</dbReference>
<dbReference type="BioGRID" id="297">
    <property type="interactions" value="3"/>
</dbReference>
<dbReference type="FunCoup" id="Q9SJW3">
    <property type="interactions" value="58"/>
</dbReference>
<dbReference type="IntAct" id="Q9SJW3">
    <property type="interactions" value="1"/>
</dbReference>
<dbReference type="STRING" id="3702.Q9SJW3"/>
<dbReference type="iPTMnet" id="Q9SJW3"/>
<dbReference type="PaxDb" id="3702-AT2G03680.2"/>
<dbReference type="ProteomicsDB" id="245346"/>
<dbReference type="EnsemblPlants" id="AT2G03680.1">
    <property type="protein sequence ID" value="AT2G03680.1"/>
    <property type="gene ID" value="AT2G03680"/>
</dbReference>
<dbReference type="EnsemblPlants" id="AT2G03680.2">
    <property type="protein sequence ID" value="AT2G03680.2"/>
    <property type="gene ID" value="AT2G03680"/>
</dbReference>
<dbReference type="EnsemblPlants" id="AT2G03680.3">
    <property type="protein sequence ID" value="AT2G03680.3"/>
    <property type="gene ID" value="AT2G03680"/>
</dbReference>
<dbReference type="GeneID" id="814896"/>
<dbReference type="Gramene" id="AT2G03680.1">
    <property type="protein sequence ID" value="AT2G03680.1"/>
    <property type="gene ID" value="AT2G03680"/>
</dbReference>
<dbReference type="Gramene" id="AT2G03680.2">
    <property type="protein sequence ID" value="AT2G03680.2"/>
    <property type="gene ID" value="AT2G03680"/>
</dbReference>
<dbReference type="Gramene" id="AT2G03680.3">
    <property type="protein sequence ID" value="AT2G03680.3"/>
    <property type="gene ID" value="AT2G03680"/>
</dbReference>
<dbReference type="KEGG" id="ath:AT2G03680"/>
<dbReference type="Araport" id="AT2G03680"/>
<dbReference type="TAIR" id="AT2G03680">
    <property type="gene designation" value="SPR1"/>
</dbReference>
<dbReference type="eggNOG" id="ENOG502S4KK">
    <property type="taxonomic scope" value="Eukaryota"/>
</dbReference>
<dbReference type="HOGENOM" id="CLU_129558_0_0_1"/>
<dbReference type="InParanoid" id="Q9SJW3"/>
<dbReference type="OMA" id="FIHIRIT"/>
<dbReference type="OrthoDB" id="62622at2759"/>
<dbReference type="PhylomeDB" id="Q9SJW3"/>
<dbReference type="PRO" id="PR:Q9SJW3"/>
<dbReference type="Proteomes" id="UP000006548">
    <property type="component" value="Chromosome 2"/>
</dbReference>
<dbReference type="ExpressionAtlas" id="Q9SJW3">
    <property type="expression patterns" value="baseline and differential"/>
</dbReference>
<dbReference type="GO" id="GO:0010005">
    <property type="term" value="C:cortical microtubule, transverse to long axis"/>
    <property type="evidence" value="ECO:0000314"/>
    <property type="project" value="TAIR"/>
</dbReference>
<dbReference type="GO" id="GO:0005829">
    <property type="term" value="C:cytosol"/>
    <property type="evidence" value="ECO:0007005"/>
    <property type="project" value="TAIR"/>
</dbReference>
<dbReference type="GO" id="GO:0005739">
    <property type="term" value="C:mitochondrion"/>
    <property type="evidence" value="ECO:0007005"/>
    <property type="project" value="TAIR"/>
</dbReference>
<dbReference type="GO" id="GO:0009524">
    <property type="term" value="C:phragmoplast"/>
    <property type="evidence" value="ECO:0000314"/>
    <property type="project" value="TAIR"/>
</dbReference>
<dbReference type="GO" id="GO:0009574">
    <property type="term" value="C:preprophase band"/>
    <property type="evidence" value="ECO:0000314"/>
    <property type="project" value="TAIR"/>
</dbReference>
<dbReference type="GO" id="GO:0005876">
    <property type="term" value="C:spindle microtubule"/>
    <property type="evidence" value="ECO:0000314"/>
    <property type="project" value="TAIR"/>
</dbReference>
<dbReference type="GO" id="GO:0051211">
    <property type="term" value="P:anisotropic cell growth"/>
    <property type="evidence" value="ECO:0000315"/>
    <property type="project" value="TAIR"/>
</dbReference>
<dbReference type="GO" id="GO:0071472">
    <property type="term" value="P:cellular response to salt stress"/>
    <property type="evidence" value="ECO:0000316"/>
    <property type="project" value="TAIR"/>
</dbReference>
<dbReference type="GO" id="GO:0043622">
    <property type="term" value="P:cortical microtubule organization"/>
    <property type="evidence" value="ECO:0000316"/>
    <property type="project" value="TAIR"/>
</dbReference>
<dbReference type="GO" id="GO:0009826">
    <property type="term" value="P:unidimensional cell growth"/>
    <property type="evidence" value="ECO:0000315"/>
    <property type="project" value="TAIR"/>
</dbReference>
<dbReference type="InterPro" id="IPR039613">
    <property type="entry name" value="SPR1/2/3/4/5"/>
</dbReference>
<dbReference type="PANTHER" id="PTHR33403:SF44">
    <property type="entry name" value="PROTEIN SPIRAL1"/>
    <property type="match status" value="1"/>
</dbReference>
<dbReference type="PANTHER" id="PTHR33403">
    <property type="entry name" value="SPR1"/>
    <property type="match status" value="1"/>
</dbReference>
<comment type="function">
    <text evidence="2 3 4 5 6">Required for directional control of cell elongation. Stabilizes growing ends of cortical microtubules and influences their dynamic properties. Acts redundantly with SP1Ls in maintaining the cortical microtubules organization essential for anisotropic cell growth. Plays a key role in salt stress-induced microtubules disassembly.</text>
</comment>
<comment type="subcellular location">
    <subcellularLocation>
        <location evidence="4">Cytoplasm</location>
        <location evidence="4">Cytoskeleton</location>
        <location evidence="4">Phragmoplast</location>
    </subcellularLocation>
    <subcellularLocation>
        <location evidence="4">Cytoplasm</location>
        <location evidence="4">Cytoskeleton</location>
        <location evidence="4">Spindle</location>
    </subcellularLocation>
</comment>
<comment type="tissue specificity">
    <text evidence="3 4 5">Ubiquitous. High expression was associated with tissues undergoing rapid cell expansion, including the root elongation zone, hypocotyls of dark grown-seedlings, and cotyledons of light-grown seedlings.</text>
</comment>
<comment type="PTM">
    <text evidence="7">Ubiquitinated (Probable). Upon salt-stress induction, it is subject to proteasome-dependent degradation.</text>
</comment>
<comment type="disruption phenotype">
    <text evidence="2 4">Isotropic expansion of endodermal and cortical cells in root, etiolated hypocotyl, and dark-grown influorescent stem, and induce right-handed spiral in epidermal cell files of these organs.</text>
</comment>
<comment type="similarity">
    <text evidence="7">Belongs to the SPIRAL1 family.</text>
</comment>
<comment type="caution">
    <text evidence="7">Was originally (Ref.2) erroneously thought to be a nitrilase associated protein NAP16kDa.</text>
</comment>
<comment type="sequence caution" evidence="7">
    <conflict type="frameshift">
        <sequence resource="EMBL-CDS" id="CAB09665"/>
    </conflict>
</comment>
<proteinExistence type="evidence at transcript level"/>
<keyword id="KW-0963">Cytoplasm</keyword>
<keyword id="KW-0206">Cytoskeleton</keyword>
<keyword id="KW-0493">Microtubule</keyword>
<keyword id="KW-1185">Reference proteome</keyword>
<keyword id="KW-0832">Ubl conjugation</keyword>
<feature type="chain" id="PRO_0000417952" description="Protein SPIRAL1">
    <location>
        <begin position="1"/>
        <end position="119"/>
    </location>
</feature>
<feature type="region of interest" description="Disordered" evidence="1">
    <location>
        <begin position="1"/>
        <end position="47"/>
    </location>
</feature>
<feature type="region of interest" description="Disordered" evidence="1">
    <location>
        <begin position="85"/>
        <end position="105"/>
    </location>
</feature>
<feature type="compositionally biased region" description="Gly residues" evidence="1">
    <location>
        <begin position="1"/>
        <end position="11"/>
    </location>
</feature>
<feature type="compositionally biased region" description="Pro residues" evidence="1">
    <location>
        <begin position="24"/>
        <end position="34"/>
    </location>
</feature>
<reference key="1">
    <citation type="journal article" date="2004" name="Plant Cell">
        <title>SPIRAL1 encodes a plant-specific microtubule-localized protein required for directional control of rapidly expanding Arabidopsis cells.</title>
        <authorList>
            <person name="Nakajima K."/>
            <person name="Furutani I."/>
            <person name="Tachimoto H."/>
            <person name="Matsubara H."/>
            <person name="Hashimoto T."/>
        </authorList>
    </citation>
    <scope>NUCLEOTIDE SEQUENCE [MRNA]</scope>
    <scope>FUNCTION</scope>
    <scope>TISSUE SPECIFICITY</scope>
    <source>
        <strain>cv. Columbia</strain>
    </source>
</reference>
<reference key="2">
    <citation type="submission" date="1997-06" db="EMBL/GenBank/DDBJ databases">
        <title>Two-hybrid screening in yeast and co-immunoprecipitation of a nitrilase binding protein gives evidence of a plant plasma membrane bound complex of IAA-biosynthesis in Arabidopsis.</title>
        <authorList>
            <person name="Bartling D."/>
        </authorList>
    </citation>
    <scope>NUCLEOTIDE SEQUENCE [MRNA]</scope>
    <source>
        <strain>cv. Columbia</strain>
        <tissue>Leaf</tissue>
    </source>
</reference>
<reference key="3">
    <citation type="journal article" date="1999" name="Nature">
        <title>Sequence and analysis of chromosome 2 of the plant Arabidopsis thaliana.</title>
        <authorList>
            <person name="Lin X."/>
            <person name="Kaul S."/>
            <person name="Rounsley S.D."/>
            <person name="Shea T.P."/>
            <person name="Benito M.-I."/>
            <person name="Town C.D."/>
            <person name="Fujii C.Y."/>
            <person name="Mason T.M."/>
            <person name="Bowman C.L."/>
            <person name="Barnstead M.E."/>
            <person name="Feldblyum T.V."/>
            <person name="Buell C.R."/>
            <person name="Ketchum K.A."/>
            <person name="Lee J.J."/>
            <person name="Ronning C.M."/>
            <person name="Koo H.L."/>
            <person name="Moffat K.S."/>
            <person name="Cronin L.A."/>
            <person name="Shen M."/>
            <person name="Pai G."/>
            <person name="Van Aken S."/>
            <person name="Umayam L."/>
            <person name="Tallon L.J."/>
            <person name="Gill J.E."/>
            <person name="Adams M.D."/>
            <person name="Carrera A.J."/>
            <person name="Creasy T.H."/>
            <person name="Goodman H.M."/>
            <person name="Somerville C.R."/>
            <person name="Copenhaver G.P."/>
            <person name="Preuss D."/>
            <person name="Nierman W.C."/>
            <person name="White O."/>
            <person name="Eisen J.A."/>
            <person name="Salzberg S.L."/>
            <person name="Fraser C.M."/>
            <person name="Venter J.C."/>
        </authorList>
    </citation>
    <scope>NUCLEOTIDE SEQUENCE [LARGE SCALE GENOMIC DNA]</scope>
    <source>
        <strain>cv. Columbia</strain>
    </source>
</reference>
<reference key="4">
    <citation type="journal article" date="2017" name="Plant J.">
        <title>Araport11: a complete reannotation of the Arabidopsis thaliana reference genome.</title>
        <authorList>
            <person name="Cheng C.Y."/>
            <person name="Krishnakumar V."/>
            <person name="Chan A.P."/>
            <person name="Thibaud-Nissen F."/>
            <person name="Schobel S."/>
            <person name="Town C.D."/>
        </authorList>
    </citation>
    <scope>GENOME REANNOTATION</scope>
    <source>
        <strain>cv. Columbia</strain>
    </source>
</reference>
<reference key="5">
    <citation type="journal article" date="2003" name="Science">
        <title>Empirical analysis of transcriptional activity in the Arabidopsis genome.</title>
        <authorList>
            <person name="Yamada K."/>
            <person name="Lim J."/>
            <person name="Dale J.M."/>
            <person name="Chen H."/>
            <person name="Shinn P."/>
            <person name="Palm C.J."/>
            <person name="Southwick A.M."/>
            <person name="Wu H.C."/>
            <person name="Kim C.J."/>
            <person name="Nguyen M."/>
            <person name="Pham P.K."/>
            <person name="Cheuk R.F."/>
            <person name="Karlin-Newmann G."/>
            <person name="Liu S.X."/>
            <person name="Lam B."/>
            <person name="Sakano H."/>
            <person name="Wu T."/>
            <person name="Yu G."/>
            <person name="Miranda M."/>
            <person name="Quach H.L."/>
            <person name="Tripp M."/>
            <person name="Chang C.H."/>
            <person name="Lee J.M."/>
            <person name="Toriumi M.J."/>
            <person name="Chan M.M."/>
            <person name="Tang C.C."/>
            <person name="Onodera C.S."/>
            <person name="Deng J.M."/>
            <person name="Akiyama K."/>
            <person name="Ansari Y."/>
            <person name="Arakawa T."/>
            <person name="Banh J."/>
            <person name="Banno F."/>
            <person name="Bowser L."/>
            <person name="Brooks S.Y."/>
            <person name="Carninci P."/>
            <person name="Chao Q."/>
            <person name="Choy N."/>
            <person name="Enju A."/>
            <person name="Goldsmith A.D."/>
            <person name="Gurjal M."/>
            <person name="Hansen N.F."/>
            <person name="Hayashizaki Y."/>
            <person name="Johnson-Hopson C."/>
            <person name="Hsuan V.W."/>
            <person name="Iida K."/>
            <person name="Karnes M."/>
            <person name="Khan S."/>
            <person name="Koesema E."/>
            <person name="Ishida J."/>
            <person name="Jiang P.X."/>
            <person name="Jones T."/>
            <person name="Kawai J."/>
            <person name="Kamiya A."/>
            <person name="Meyers C."/>
            <person name="Nakajima M."/>
            <person name="Narusaka M."/>
            <person name="Seki M."/>
            <person name="Sakurai T."/>
            <person name="Satou M."/>
            <person name="Tamse R."/>
            <person name="Vaysberg M."/>
            <person name="Wallender E.K."/>
            <person name="Wong C."/>
            <person name="Yamamura Y."/>
            <person name="Yuan S."/>
            <person name="Shinozaki K."/>
            <person name="Davis R.W."/>
            <person name="Theologis A."/>
            <person name="Ecker J.R."/>
        </authorList>
    </citation>
    <scope>NUCLEOTIDE SEQUENCE [LARGE SCALE MRNA]</scope>
    <source>
        <strain>cv. Columbia</strain>
    </source>
</reference>
<reference key="6">
    <citation type="submission" date="2002-03" db="EMBL/GenBank/DDBJ databases">
        <title>Full-length cDNA from Arabidopsis thaliana.</title>
        <authorList>
            <person name="Brover V.V."/>
            <person name="Troukhan M.E."/>
            <person name="Alexandrov N.A."/>
            <person name="Lu Y.-P."/>
            <person name="Flavell R.B."/>
            <person name="Feldmann K.A."/>
        </authorList>
    </citation>
    <scope>NUCLEOTIDE SEQUENCE [LARGE SCALE MRNA]</scope>
</reference>
<reference key="7">
    <citation type="journal article" date="2000" name="Development">
        <title>The SPIRAL genes are required for directional control of cell elongation in Arabidopsis thaliana.</title>
        <authorList>
            <person name="Furutani I."/>
            <person name="Watanabe Y."/>
            <person name="Prieto R."/>
            <person name="Masukawa M."/>
            <person name="Suzuki K."/>
            <person name="Naoi K."/>
            <person name="Thitamadee S."/>
            <person name="Shikanai T."/>
            <person name="Hashimoto T."/>
        </authorList>
    </citation>
    <scope>FUNCTION</scope>
    <scope>DISRUPTION PHENOTYPE</scope>
</reference>
<reference key="8">
    <citation type="book" date="2002" name="Proceedings of the 13th international conference on Arabidopsis research">
        <title>Functional analysis of SPIRAL1-LIKE genes.</title>
        <authorList>
            <person name="Nakajima K."/>
            <person name="Kawamura T."/>
            <person name="Furutani I."/>
            <person name="Hashimoto T."/>
        </authorList>
    </citation>
    <scope>GENE FAMILY</scope>
</reference>
<reference key="9">
    <citation type="journal article" date="2004" name="Plant Cell">
        <title>The Arabidopsis sku6/spiral1 gene encodes a plus end-localized microtubule-interacting protein involved in directional cell expansion.</title>
        <authorList>
            <person name="Sedbrook J.C."/>
            <person name="Ehrhardt D.W."/>
            <person name="Fisher S.E."/>
            <person name="Scheible W.R."/>
            <person name="Somerville C.R."/>
        </authorList>
    </citation>
    <scope>FUNCTION</scope>
    <scope>DISRUPTION PHENOTYPE</scope>
    <scope>SUBCELLULAR LOCATION</scope>
    <scope>TISSUE SPECIFICITY</scope>
</reference>
<reference key="10">
    <citation type="journal article" date="2006" name="Plant Cell Physiol.">
        <title>Role of the SPIRAL1 gene family in anisotropic growth of Arabidopsis thaliana.</title>
        <authorList>
            <person name="Nakajima K."/>
            <person name="Kawamura T."/>
            <person name="Hashimoto T."/>
        </authorList>
    </citation>
    <scope>FUNCTION</scope>
    <scope>TISSUE SPECIFICITY</scope>
    <scope>GENE FAMILY</scope>
</reference>
<reference key="11">
    <citation type="journal article" date="2011" name="Plant Cell">
        <title>Salt stress-induced disassembly of Arabidopsis cortical microtubule arrays involves 26S proteasome-dependent degradation of SPIRAL1.</title>
        <authorList>
            <person name="Wang S."/>
            <person name="Kurepa J."/>
            <person name="Hashimoto T."/>
            <person name="Smalle J.A."/>
        </authorList>
    </citation>
    <scope>FUNCTION</scope>
    <scope>DEGRADATION BY PROTEASOME</scope>
</reference>
<sequence length="119" mass="11920">MGRGNSCGGGQSSLDYLFGGDAPAPKPVPAPRPAPTESNNGPAPPVTAVTATALTTATTSVEPAELNKQIPAGIKTPVNNYARAEGQNTGNFLTDRPSTKVHAAPGGGSSLDYLFTGGK</sequence>
<evidence type="ECO:0000256" key="1">
    <source>
        <dbReference type="SAM" id="MobiDB-lite"/>
    </source>
</evidence>
<evidence type="ECO:0000269" key="2">
    <source>
    </source>
</evidence>
<evidence type="ECO:0000269" key="3">
    <source>
    </source>
</evidence>
<evidence type="ECO:0000269" key="4">
    <source>
    </source>
</evidence>
<evidence type="ECO:0000269" key="5">
    <source>
    </source>
</evidence>
<evidence type="ECO:0000269" key="6">
    <source>
    </source>
</evidence>
<evidence type="ECO:0000305" key="7"/>
<gene>
    <name type="primary">SPR1</name>
    <name type="synonym">SKU6</name>
    <name type="ordered locus">At2g03680</name>
    <name type="ORF">F19B11.13</name>
</gene>
<protein>
    <recommendedName>
        <fullName>Protein SPIRAL1</fullName>
    </recommendedName>
    <alternativeName>
        <fullName>Protein NAP16kDa</fullName>
    </alternativeName>
</protein>
<organism>
    <name type="scientific">Arabidopsis thaliana</name>
    <name type="common">Mouse-ear cress</name>
    <dbReference type="NCBI Taxonomy" id="3702"/>
    <lineage>
        <taxon>Eukaryota</taxon>
        <taxon>Viridiplantae</taxon>
        <taxon>Streptophyta</taxon>
        <taxon>Embryophyta</taxon>
        <taxon>Tracheophyta</taxon>
        <taxon>Spermatophyta</taxon>
        <taxon>Magnoliopsida</taxon>
        <taxon>eudicotyledons</taxon>
        <taxon>Gunneridae</taxon>
        <taxon>Pentapetalae</taxon>
        <taxon>rosids</taxon>
        <taxon>malvids</taxon>
        <taxon>Brassicales</taxon>
        <taxon>Brassicaceae</taxon>
        <taxon>Camelineae</taxon>
        <taxon>Arabidopsis</taxon>
    </lineage>
</organism>
<name>SPR1_ARATH</name>
<accession>Q9SJW3</accession>
<accession>O49622</accession>